<keyword id="KW-1015">Disulfide bond</keyword>
<keyword id="KW-0325">Glycoprotein</keyword>
<keyword id="KW-0358">Heparin-binding</keyword>
<keyword id="KW-0378">Hydrolase</keyword>
<keyword id="KW-0442">Lipid degradation</keyword>
<keyword id="KW-0443">Lipid metabolism</keyword>
<keyword id="KW-0964">Secreted</keyword>
<keyword id="KW-0732">Signal</keyword>
<dbReference type="EC" id="3.1.1.3"/>
<dbReference type="EMBL" id="JU174458">
    <property type="protein sequence ID" value="AFJ49984.1"/>
    <property type="molecule type" value="mRNA"/>
</dbReference>
<dbReference type="SMR" id="J3RZ81"/>
<dbReference type="ESTHER" id="croad-lipe">
    <property type="family name" value="Lipoprotein_Lipase"/>
</dbReference>
<dbReference type="GO" id="GO:0005615">
    <property type="term" value="C:extracellular space"/>
    <property type="evidence" value="ECO:0007669"/>
    <property type="project" value="TreeGrafter"/>
</dbReference>
<dbReference type="GO" id="GO:0008201">
    <property type="term" value="F:heparin binding"/>
    <property type="evidence" value="ECO:0007669"/>
    <property type="project" value="UniProtKB-KW"/>
</dbReference>
<dbReference type="GO" id="GO:0004465">
    <property type="term" value="F:lipoprotein lipase activity"/>
    <property type="evidence" value="ECO:0007669"/>
    <property type="project" value="InterPro"/>
</dbReference>
<dbReference type="GO" id="GO:0016042">
    <property type="term" value="P:lipid catabolic process"/>
    <property type="evidence" value="ECO:0007669"/>
    <property type="project" value="UniProtKB-KW"/>
</dbReference>
<dbReference type="CDD" id="cd00707">
    <property type="entry name" value="Pancreat_lipase_like"/>
    <property type="match status" value="1"/>
</dbReference>
<dbReference type="FunFam" id="2.60.60.20:FF:000010">
    <property type="entry name" value="hepatic triacylglycerol lipase"/>
    <property type="match status" value="1"/>
</dbReference>
<dbReference type="FunFam" id="3.40.50.1820:FF:000109">
    <property type="entry name" value="Lipase, endothelial"/>
    <property type="match status" value="1"/>
</dbReference>
<dbReference type="Gene3D" id="3.40.50.1820">
    <property type="entry name" value="alpha/beta hydrolase"/>
    <property type="match status" value="1"/>
</dbReference>
<dbReference type="Gene3D" id="2.60.60.20">
    <property type="entry name" value="PLAT/LH2 domain"/>
    <property type="match status" value="1"/>
</dbReference>
<dbReference type="InterPro" id="IPR029058">
    <property type="entry name" value="AB_hydrolase_fold"/>
</dbReference>
<dbReference type="InterPro" id="IPR013818">
    <property type="entry name" value="Lipase"/>
</dbReference>
<dbReference type="InterPro" id="IPR016272">
    <property type="entry name" value="Lipase_LIPH"/>
</dbReference>
<dbReference type="InterPro" id="IPR033906">
    <property type="entry name" value="Lipase_N"/>
</dbReference>
<dbReference type="InterPro" id="IPR002330">
    <property type="entry name" value="Lipo_Lipase"/>
</dbReference>
<dbReference type="InterPro" id="IPR001024">
    <property type="entry name" value="PLAT/LH2_dom"/>
</dbReference>
<dbReference type="InterPro" id="IPR036392">
    <property type="entry name" value="PLAT/LH2_dom_sf"/>
</dbReference>
<dbReference type="InterPro" id="IPR000734">
    <property type="entry name" value="TAG_lipase"/>
</dbReference>
<dbReference type="PANTHER" id="PTHR11610:SF13">
    <property type="entry name" value="ENDOTHELIAL LIPASE"/>
    <property type="match status" value="1"/>
</dbReference>
<dbReference type="PANTHER" id="PTHR11610">
    <property type="entry name" value="LIPASE"/>
    <property type="match status" value="1"/>
</dbReference>
<dbReference type="Pfam" id="PF00151">
    <property type="entry name" value="Lipase"/>
    <property type="match status" value="1"/>
</dbReference>
<dbReference type="Pfam" id="PF01477">
    <property type="entry name" value="PLAT"/>
    <property type="match status" value="1"/>
</dbReference>
<dbReference type="PIRSF" id="PIRSF000865">
    <property type="entry name" value="Lipoprotein_lipase_LIPH"/>
    <property type="match status" value="1"/>
</dbReference>
<dbReference type="PRINTS" id="PR00822">
    <property type="entry name" value="LIPOLIPASE"/>
</dbReference>
<dbReference type="PRINTS" id="PR00821">
    <property type="entry name" value="TAGLIPASE"/>
</dbReference>
<dbReference type="SMART" id="SM00308">
    <property type="entry name" value="LH2"/>
    <property type="match status" value="1"/>
</dbReference>
<dbReference type="SUPFAM" id="SSF53474">
    <property type="entry name" value="alpha/beta-Hydrolases"/>
    <property type="match status" value="1"/>
</dbReference>
<dbReference type="SUPFAM" id="SSF49723">
    <property type="entry name" value="Lipase/lipooxygenase domain (PLAT/LH2 domain)"/>
    <property type="match status" value="1"/>
</dbReference>
<dbReference type="PROSITE" id="PS00120">
    <property type="entry name" value="LIPASE_SER"/>
    <property type="match status" value="1"/>
</dbReference>
<dbReference type="PROSITE" id="PS50095">
    <property type="entry name" value="PLAT"/>
    <property type="match status" value="1"/>
</dbReference>
<reference key="1">
    <citation type="journal article" date="2012" name="BMC Genomics">
        <title>The venom-gland transcriptome of the eastern diamondback rattlesnake (Crotalus adamanteus).</title>
        <authorList>
            <person name="Rokyta D.R."/>
            <person name="Lemmon A.R."/>
            <person name="Margres M.J."/>
            <person name="Aronow K."/>
        </authorList>
    </citation>
    <scope>NUCLEOTIDE SEQUENCE [MRNA]</scope>
    <source>
        <tissue>Venom gland</tissue>
    </source>
</reference>
<name>LIPE_CROAD</name>
<protein>
    <recommendedName>
        <fullName>Putative endothelial lipase</fullName>
        <ecNumber>3.1.1.3</ecNumber>
    </recommendedName>
</protein>
<proteinExistence type="evidence at transcript level"/>
<comment type="function">
    <text evidence="1">Has phospholipase and triglyceride lipase activities.</text>
</comment>
<comment type="catalytic activity">
    <reaction>
        <text>a triacylglycerol + H2O = a diacylglycerol + a fatty acid + H(+)</text>
        <dbReference type="Rhea" id="RHEA:12044"/>
        <dbReference type="ChEBI" id="CHEBI:15377"/>
        <dbReference type="ChEBI" id="CHEBI:15378"/>
        <dbReference type="ChEBI" id="CHEBI:17855"/>
        <dbReference type="ChEBI" id="CHEBI:18035"/>
        <dbReference type="ChEBI" id="CHEBI:28868"/>
        <dbReference type="EC" id="3.1.1.3"/>
    </reaction>
</comment>
<comment type="activity regulation">
    <text>Inhibited by serum.</text>
</comment>
<comment type="subunit">
    <text evidence="1">Head to tail homodimer.</text>
</comment>
<comment type="subcellular location">
    <subcellularLocation>
        <location evidence="1">Secreted</location>
    </subcellularLocation>
</comment>
<comment type="tissue specificity">
    <text>Expressed by the venom gland.</text>
</comment>
<comment type="similarity">
    <text evidence="5">Belongs to the AB hydrolase superfamily. Lipase family.</text>
</comment>
<accession>J3RZ81</accession>
<feature type="signal peptide" evidence="2">
    <location>
        <begin position="1"/>
        <end position="23"/>
    </location>
</feature>
<feature type="chain" id="PRO_0000422919" description="Putative endothelial lipase">
    <location>
        <begin position="24"/>
        <end position="497"/>
    </location>
</feature>
<feature type="domain" description="PLAT" evidence="3">
    <location>
        <begin position="357"/>
        <end position="492"/>
    </location>
</feature>
<feature type="active site" description="Nucleophile" evidence="1">
    <location>
        <position position="178"/>
    </location>
</feature>
<feature type="active site" description="Charge relay system" evidence="4">
    <location>
        <position position="202"/>
    </location>
</feature>
<feature type="active site" description="Charge relay system" evidence="4">
    <location>
        <position position="284"/>
    </location>
</feature>
<feature type="binding site" evidence="1">
    <location>
        <begin position="335"/>
        <end position="347"/>
    </location>
    <ligand>
        <name>heparin</name>
        <dbReference type="ChEBI" id="CHEBI:28304"/>
    </ligand>
</feature>
<feature type="glycosylation site" description="N-linked (GlcNAc...) asparagine" evidence="2">
    <location>
        <position position="89"/>
    </location>
</feature>
<feature type="glycosylation site" description="N-linked (GlcNAc...) asparagine" evidence="2">
    <location>
        <position position="145"/>
    </location>
</feature>
<feature type="glycosylation site" description="N-linked (GlcNAc...) asparagine" evidence="2">
    <location>
        <position position="403"/>
    </location>
</feature>
<feature type="disulfide bond" evidence="3">
    <location>
        <begin position="73"/>
        <end position="86"/>
    </location>
</feature>
<feature type="disulfide bond" evidence="3">
    <location>
        <begin position="262"/>
        <end position="282"/>
    </location>
</feature>
<feature type="disulfide bond" evidence="3">
    <location>
        <begin position="307"/>
        <end position="326"/>
    </location>
</feature>
<feature type="disulfide bond" evidence="3">
    <location>
        <begin position="318"/>
        <end position="321"/>
    </location>
</feature>
<evidence type="ECO:0000250" key="1"/>
<evidence type="ECO:0000255" key="2"/>
<evidence type="ECO:0000255" key="3">
    <source>
        <dbReference type="PROSITE-ProRule" id="PRU00152"/>
    </source>
</evidence>
<evidence type="ECO:0000255" key="4">
    <source>
        <dbReference type="PROSITE-ProRule" id="PRU10037"/>
    </source>
</evidence>
<evidence type="ECO:0000305" key="5"/>
<sequence>MRACPFLLLLLLPLLLSLGRIAAVRDAAGAGPERRQDDSVSQVQKLREEPSKVRDLQVKFIVRTTPDLDDADCYITAGQDHLLDDCNFNVSAKTFFVIHGWTMGGMYERWLDTLVSALQEREKEANVVVVNWLALAQQLYTIAVNNTRVVGKELAGLLDWLEEKKDFQLKNVHLIGYSLGAHIAGYTGNYARGIIGRITGLDPAGPMFEGADPSRRLSPDDADFVDVLHTYTRETLGISIGIQMPVGHIDIYPNGGDIQPGCGLTDILGTLALGEIGDLVICEHERSVHLFVDSLVNKDKQSFAFQCTDSGRFKKGICLSCRKNRCNSIGYNIKKMRNKRNSKMYLKTRAGMPFKVFHYQLKIHVFSYKSLGETEPSFSVTFYGTSGDSEPLPLEVSDQIGLNYTNTFLVYTEEDVGDILRIKLTWESTTQSWYNFWSQMKNYWSKPDPSSKELQIRRIRVKSGETQKKAMLAVEFWELKSTCLKMVKVEKHCSRPL</sequence>
<organism>
    <name type="scientific">Crotalus adamanteus</name>
    <name type="common">Eastern diamondback rattlesnake</name>
    <dbReference type="NCBI Taxonomy" id="8729"/>
    <lineage>
        <taxon>Eukaryota</taxon>
        <taxon>Metazoa</taxon>
        <taxon>Chordata</taxon>
        <taxon>Craniata</taxon>
        <taxon>Vertebrata</taxon>
        <taxon>Euteleostomi</taxon>
        <taxon>Lepidosauria</taxon>
        <taxon>Squamata</taxon>
        <taxon>Bifurcata</taxon>
        <taxon>Unidentata</taxon>
        <taxon>Episquamata</taxon>
        <taxon>Toxicofera</taxon>
        <taxon>Serpentes</taxon>
        <taxon>Colubroidea</taxon>
        <taxon>Viperidae</taxon>
        <taxon>Crotalinae</taxon>
        <taxon>Crotalus</taxon>
    </lineage>
</organism>